<accession>P9WET9</accession>
<evidence type="ECO:0000250" key="1">
    <source>
        <dbReference type="UniProtKB" id="Q03149"/>
    </source>
</evidence>
<evidence type="ECO:0000250" key="2">
    <source>
        <dbReference type="UniProtKB" id="Q5ATJ7"/>
    </source>
</evidence>
<evidence type="ECO:0000250" key="3">
    <source>
        <dbReference type="UniProtKB" id="Q5B0D0"/>
    </source>
</evidence>
<evidence type="ECO:0000255" key="4"/>
<evidence type="ECO:0000255" key="5">
    <source>
        <dbReference type="PROSITE-ProRule" id="PRU00258"/>
    </source>
</evidence>
<evidence type="ECO:0000255" key="6">
    <source>
        <dbReference type="PROSITE-ProRule" id="PRU01348"/>
    </source>
</evidence>
<evidence type="ECO:0000255" key="7">
    <source>
        <dbReference type="PROSITE-ProRule" id="PRU01363"/>
    </source>
</evidence>
<evidence type="ECO:0000255" key="8">
    <source>
        <dbReference type="PROSITE-ProRule" id="PRU10022"/>
    </source>
</evidence>
<evidence type="ECO:0000256" key="9">
    <source>
        <dbReference type="SAM" id="MobiDB-lite"/>
    </source>
</evidence>
<evidence type="ECO:0000269" key="10">
    <source>
    </source>
</evidence>
<evidence type="ECO:0000303" key="11">
    <source>
    </source>
</evidence>
<evidence type="ECO:0000305" key="12">
    <source>
    </source>
</evidence>
<organism>
    <name type="scientific">Byssochlamys spectabilis</name>
    <name type="common">Paecilomyces variotii</name>
    <dbReference type="NCBI Taxonomy" id="264951"/>
    <lineage>
        <taxon>Eukaryota</taxon>
        <taxon>Fungi</taxon>
        <taxon>Dikarya</taxon>
        <taxon>Ascomycota</taxon>
        <taxon>Pezizomycotina</taxon>
        <taxon>Eurotiomycetes</taxon>
        <taxon>Eurotiomycetidae</taxon>
        <taxon>Eurotiales</taxon>
        <taxon>Thermoascaceae</taxon>
        <taxon>Paecilomyces</taxon>
    </lineage>
</organism>
<feature type="chain" id="PRO_0000455748" description="Non-reducing polyketide synthase PvBS090_009107">
    <location>
        <begin position="1"/>
        <end position="2149"/>
    </location>
</feature>
<feature type="domain" description="Ketosynthase family 3 (KS3)" evidence="6">
    <location>
        <begin position="375"/>
        <end position="806"/>
    </location>
</feature>
<feature type="domain" description="PKS/mFAS DH" evidence="7">
    <location>
        <begin position="1294"/>
        <end position="1599"/>
    </location>
</feature>
<feature type="domain" description="Carrier 1" evidence="5">
    <location>
        <begin position="1649"/>
        <end position="1726"/>
    </location>
</feature>
<feature type="domain" description="Carrier 2" evidence="5">
    <location>
        <begin position="1769"/>
        <end position="1846"/>
    </location>
</feature>
<feature type="region of interest" description="N-terminal acylcarrier protein transacylase domain (SAT)" evidence="4">
    <location>
        <begin position="8"/>
        <end position="244"/>
    </location>
</feature>
<feature type="region of interest" description="Malonyl-CoA:ACP transacylase (MAT) domain" evidence="4">
    <location>
        <begin position="911"/>
        <end position="1231"/>
    </location>
</feature>
<feature type="region of interest" description="Product template (PT) domain" evidence="4">
    <location>
        <begin position="1290"/>
        <end position="1604"/>
    </location>
</feature>
<feature type="region of interest" description="N-terminal hotdog fold" evidence="7">
    <location>
        <begin position="1294"/>
        <end position="1426"/>
    </location>
</feature>
<feature type="region of interest" description="C-terminal hotdog fold" evidence="7">
    <location>
        <begin position="1454"/>
        <end position="1599"/>
    </location>
</feature>
<feature type="region of interest" description="Disordered" evidence="9">
    <location>
        <begin position="1604"/>
        <end position="1631"/>
    </location>
</feature>
<feature type="region of interest" description="Disordered" evidence="9">
    <location>
        <begin position="1722"/>
        <end position="1763"/>
    </location>
</feature>
<feature type="region of interest" description="Thioesterase (TE) domain" evidence="4">
    <location>
        <begin position="1875"/>
        <end position="2147"/>
    </location>
</feature>
<feature type="compositionally biased region" description="Low complexity" evidence="9">
    <location>
        <begin position="1722"/>
        <end position="1731"/>
    </location>
</feature>
<feature type="compositionally biased region" description="Low complexity" evidence="9">
    <location>
        <begin position="1744"/>
        <end position="1755"/>
    </location>
</feature>
<feature type="active site" description="For beta-ketoacyl synthase activity" evidence="6">
    <location>
        <position position="547"/>
    </location>
</feature>
<feature type="active site" description="For beta-ketoacyl synthase activity" evidence="6">
    <location>
        <position position="682"/>
    </location>
</feature>
<feature type="active site" description="For beta-ketoacyl synthase activity" evidence="6">
    <location>
        <position position="724"/>
    </location>
</feature>
<feature type="active site" description="For acyl/malonyl transferase activity" evidence="8">
    <location>
        <position position="1000"/>
    </location>
</feature>
<feature type="active site" description="Proton acceptor; for dehydratase activity" evidence="7">
    <location>
        <position position="1326"/>
    </location>
</feature>
<feature type="active site" description="Proton donor; for dehydratase activity" evidence="7">
    <location>
        <position position="1512"/>
    </location>
</feature>
<feature type="active site" description="For thioesterase activity" evidence="1">
    <location>
        <position position="1965"/>
    </location>
</feature>
<feature type="modified residue" description="O-(pantetheine 4'-phosphoryl)serine" evidence="5">
    <location>
        <position position="1686"/>
    </location>
</feature>
<feature type="modified residue" description="O-(pantetheine 4'-phosphoryl)serine" evidence="5">
    <location>
        <position position="1806"/>
    </location>
</feature>
<proteinExistence type="evidence at protein level"/>
<keyword id="KW-0511">Multifunctional enzyme</keyword>
<keyword id="KW-0596">Phosphopantetheine</keyword>
<keyword id="KW-0597">Phosphoprotein</keyword>
<keyword id="KW-0677">Repeat</keyword>
<keyword id="KW-0808">Transferase</keyword>
<dbReference type="EC" id="2.3.1.-" evidence="10"/>
<dbReference type="EMBL" id="MSJH02000000">
    <property type="status" value="NOT_ANNOTATED_CDS"/>
    <property type="molecule type" value="Genomic_DNA"/>
</dbReference>
<dbReference type="SMR" id="P9WET9"/>
<dbReference type="GO" id="GO:0004315">
    <property type="term" value="F:3-oxoacyl-[acyl-carrier-protein] synthase activity"/>
    <property type="evidence" value="ECO:0007669"/>
    <property type="project" value="InterPro"/>
</dbReference>
<dbReference type="GO" id="GO:0004312">
    <property type="term" value="F:fatty acid synthase activity"/>
    <property type="evidence" value="ECO:0007669"/>
    <property type="project" value="TreeGrafter"/>
</dbReference>
<dbReference type="GO" id="GO:0031177">
    <property type="term" value="F:phosphopantetheine binding"/>
    <property type="evidence" value="ECO:0007669"/>
    <property type="project" value="InterPro"/>
</dbReference>
<dbReference type="GO" id="GO:0006633">
    <property type="term" value="P:fatty acid biosynthetic process"/>
    <property type="evidence" value="ECO:0007669"/>
    <property type="project" value="InterPro"/>
</dbReference>
<dbReference type="GO" id="GO:0046189">
    <property type="term" value="P:phenol-containing compound biosynthetic process"/>
    <property type="evidence" value="ECO:0007669"/>
    <property type="project" value="UniProtKB-ARBA"/>
</dbReference>
<dbReference type="GO" id="GO:0030639">
    <property type="term" value="P:polyketide biosynthetic process"/>
    <property type="evidence" value="ECO:0007669"/>
    <property type="project" value="UniProtKB-ARBA"/>
</dbReference>
<dbReference type="GO" id="GO:0009403">
    <property type="term" value="P:toxin biosynthetic process"/>
    <property type="evidence" value="ECO:0007669"/>
    <property type="project" value="UniProtKB-ARBA"/>
</dbReference>
<dbReference type="CDD" id="cd00833">
    <property type="entry name" value="PKS"/>
    <property type="match status" value="1"/>
</dbReference>
<dbReference type="FunFam" id="3.40.366.10:FF:000002">
    <property type="entry name" value="Probable polyketide synthase 2"/>
    <property type="match status" value="1"/>
</dbReference>
<dbReference type="FunFam" id="1.10.1200.10:FF:000011">
    <property type="entry name" value="Sterigmatocystin biosynthesis polyketide synthase"/>
    <property type="match status" value="2"/>
</dbReference>
<dbReference type="FunFam" id="3.10.129.110:FF:000001">
    <property type="entry name" value="Sterigmatocystin biosynthesis polyketide synthase"/>
    <property type="match status" value="1"/>
</dbReference>
<dbReference type="FunFam" id="3.40.47.10:FF:000031">
    <property type="entry name" value="Sterigmatocystin biosynthesis polyketide synthase"/>
    <property type="match status" value="1"/>
</dbReference>
<dbReference type="FunFam" id="3.40.50.1820:FF:000116">
    <property type="entry name" value="Sterigmatocystin biosynthesis polyketide synthase"/>
    <property type="match status" value="1"/>
</dbReference>
<dbReference type="Gene3D" id="3.30.70.3290">
    <property type="match status" value="1"/>
</dbReference>
<dbReference type="Gene3D" id="3.40.47.10">
    <property type="match status" value="1"/>
</dbReference>
<dbReference type="Gene3D" id="1.10.1200.10">
    <property type="entry name" value="ACP-like"/>
    <property type="match status" value="2"/>
</dbReference>
<dbReference type="Gene3D" id="3.40.50.1820">
    <property type="entry name" value="alpha/beta hydrolase"/>
    <property type="match status" value="1"/>
</dbReference>
<dbReference type="Gene3D" id="3.40.366.10">
    <property type="entry name" value="Malonyl-Coenzyme A Acyl Carrier Protein, domain 2"/>
    <property type="match status" value="2"/>
</dbReference>
<dbReference type="Gene3D" id="3.10.129.110">
    <property type="entry name" value="Polyketide synthase dehydratase"/>
    <property type="match status" value="1"/>
</dbReference>
<dbReference type="InterPro" id="IPR029058">
    <property type="entry name" value="AB_hydrolase_fold"/>
</dbReference>
<dbReference type="InterPro" id="IPR001227">
    <property type="entry name" value="Ac_transferase_dom_sf"/>
</dbReference>
<dbReference type="InterPro" id="IPR036736">
    <property type="entry name" value="ACP-like_sf"/>
</dbReference>
<dbReference type="InterPro" id="IPR014043">
    <property type="entry name" value="Acyl_transferase_dom"/>
</dbReference>
<dbReference type="InterPro" id="IPR016035">
    <property type="entry name" value="Acyl_Trfase/lysoPLipase"/>
</dbReference>
<dbReference type="InterPro" id="IPR018201">
    <property type="entry name" value="Ketoacyl_synth_AS"/>
</dbReference>
<dbReference type="InterPro" id="IPR014031">
    <property type="entry name" value="Ketoacyl_synth_C"/>
</dbReference>
<dbReference type="InterPro" id="IPR014030">
    <property type="entry name" value="Ketoacyl_synth_N"/>
</dbReference>
<dbReference type="InterPro" id="IPR016036">
    <property type="entry name" value="Malonyl_transacylase_ACP-bd"/>
</dbReference>
<dbReference type="InterPro" id="IPR020841">
    <property type="entry name" value="PKS_Beta-ketoAc_synthase_dom"/>
</dbReference>
<dbReference type="InterPro" id="IPR042104">
    <property type="entry name" value="PKS_dehydratase_sf"/>
</dbReference>
<dbReference type="InterPro" id="IPR049551">
    <property type="entry name" value="PKS_DH_C"/>
</dbReference>
<dbReference type="InterPro" id="IPR049900">
    <property type="entry name" value="PKS_mFAS_DH"/>
</dbReference>
<dbReference type="InterPro" id="IPR050091">
    <property type="entry name" value="PKS_NRPS_Biosynth_Enz"/>
</dbReference>
<dbReference type="InterPro" id="IPR020806">
    <property type="entry name" value="PKS_PP-bd"/>
</dbReference>
<dbReference type="InterPro" id="IPR009081">
    <property type="entry name" value="PP-bd_ACP"/>
</dbReference>
<dbReference type="InterPro" id="IPR006162">
    <property type="entry name" value="Ppantetheine_attach_site"/>
</dbReference>
<dbReference type="InterPro" id="IPR030918">
    <property type="entry name" value="PT_fungal_PKS"/>
</dbReference>
<dbReference type="InterPro" id="IPR032088">
    <property type="entry name" value="SAT"/>
</dbReference>
<dbReference type="InterPro" id="IPR001031">
    <property type="entry name" value="Thioesterase"/>
</dbReference>
<dbReference type="InterPro" id="IPR016039">
    <property type="entry name" value="Thiolase-like"/>
</dbReference>
<dbReference type="NCBIfam" id="TIGR04532">
    <property type="entry name" value="PT_fungal_PKS"/>
    <property type="match status" value="1"/>
</dbReference>
<dbReference type="PANTHER" id="PTHR43775">
    <property type="entry name" value="FATTY ACID SYNTHASE"/>
    <property type="match status" value="1"/>
</dbReference>
<dbReference type="PANTHER" id="PTHR43775:SF37">
    <property type="entry name" value="SI:DKEY-61P9.11"/>
    <property type="match status" value="1"/>
</dbReference>
<dbReference type="Pfam" id="PF00698">
    <property type="entry name" value="Acyl_transf_1"/>
    <property type="match status" value="1"/>
</dbReference>
<dbReference type="Pfam" id="PF00109">
    <property type="entry name" value="ketoacyl-synt"/>
    <property type="match status" value="1"/>
</dbReference>
<dbReference type="Pfam" id="PF02801">
    <property type="entry name" value="Ketoacyl-synt_C"/>
    <property type="match status" value="1"/>
</dbReference>
<dbReference type="Pfam" id="PF00550">
    <property type="entry name" value="PP-binding"/>
    <property type="match status" value="2"/>
</dbReference>
<dbReference type="Pfam" id="PF14765">
    <property type="entry name" value="PS-DH"/>
    <property type="match status" value="1"/>
</dbReference>
<dbReference type="Pfam" id="PF16073">
    <property type="entry name" value="SAT"/>
    <property type="match status" value="1"/>
</dbReference>
<dbReference type="Pfam" id="PF00975">
    <property type="entry name" value="Thioesterase"/>
    <property type="match status" value="1"/>
</dbReference>
<dbReference type="SMART" id="SM00827">
    <property type="entry name" value="PKS_AT"/>
    <property type="match status" value="1"/>
</dbReference>
<dbReference type="SMART" id="SM00825">
    <property type="entry name" value="PKS_KS"/>
    <property type="match status" value="1"/>
</dbReference>
<dbReference type="SMART" id="SM00823">
    <property type="entry name" value="PKS_PP"/>
    <property type="match status" value="2"/>
</dbReference>
<dbReference type="SUPFAM" id="SSF47336">
    <property type="entry name" value="ACP-like"/>
    <property type="match status" value="2"/>
</dbReference>
<dbReference type="SUPFAM" id="SSF53474">
    <property type="entry name" value="alpha/beta-Hydrolases"/>
    <property type="match status" value="1"/>
</dbReference>
<dbReference type="SUPFAM" id="SSF52151">
    <property type="entry name" value="FabD/lysophospholipase-like"/>
    <property type="match status" value="1"/>
</dbReference>
<dbReference type="SUPFAM" id="SSF55048">
    <property type="entry name" value="Probable ACP-binding domain of malonyl-CoA ACP transacylase"/>
    <property type="match status" value="1"/>
</dbReference>
<dbReference type="SUPFAM" id="SSF53901">
    <property type="entry name" value="Thiolase-like"/>
    <property type="match status" value="1"/>
</dbReference>
<dbReference type="PROSITE" id="PS50075">
    <property type="entry name" value="CARRIER"/>
    <property type="match status" value="2"/>
</dbReference>
<dbReference type="PROSITE" id="PS00606">
    <property type="entry name" value="KS3_1"/>
    <property type="match status" value="1"/>
</dbReference>
<dbReference type="PROSITE" id="PS52004">
    <property type="entry name" value="KS3_2"/>
    <property type="match status" value="1"/>
</dbReference>
<dbReference type="PROSITE" id="PS00012">
    <property type="entry name" value="PHOSPHOPANTETHEINE"/>
    <property type="match status" value="2"/>
</dbReference>
<dbReference type="PROSITE" id="PS52019">
    <property type="entry name" value="PKS_MFAS_DH"/>
    <property type="match status" value="1"/>
</dbReference>
<sequence>MRVTSRVYLFGDQTGEFETGLRQLLQAKNNSLLTSFFERCFYALRQEVSKLPPSQRQIFPRFTSIVDLLARHREFGPNPALESALTCIYHFACFINHYGDGGHAYPSASESHIIGLCTGLLASAAVSSSRTVGELIPAAIETVTVSLRLGLCVLRTRDLIDRSYEKSQSWSMVVSGLNEEEVGALIHGFCQRKSISPSSRPYISAVNTHSLTISAPPTILQEFTNVCLSKENRPVRVPVHAPYHAPHLYDRRDVTSILESWPKGELANYTPRIPVLSSETGEIILARNLHELLGIALEEILLRKLCWDKVQDGYASMLKRTSSAACRIFPIASAASHGLSAALKRTGVPDVEVDNTISESAKTCDNENSTGRTEQSKIAIIGLSGRFPDAPSPEHFWDLLYKGLDVHRVVPPDRWDVKAHVDPTGKIRNTSKVPYGCWIEEPGLFDPRFFNMSPREALQADPAQRLALVTAYEALEQAGFVPDSTPSTQKDRVGIFYGMTSDDYREVNSGQDIDTYFIPGGNRAFTPGRINYHFKFSGPSVSVDTACSSSLAAIHLACNSLWRNDCDTAIAGGTNVLTNPDNFAGLDRGHFLSAKGNCNTFDDEADGYCRADAVGTVVLKRLEDAQADKDPILGVILGAYTNHSAEAVSMTRPHVGAQAFIFNKLLNEANVSPRDVGYIEMHGTGTQAGDAVEMKSVLDIFAPDYTRGPSQSLYLGSAKANIGHAESASGVSSLIKVLLMLKANTIPPHCGIKTKINHNFPTDFKERNVHIAFKPTSWERPQDGKRRLFVNNFSAAGGNTALLIEDAPLSTVSGAPDSRSTHIVAVSARSQSSLRNNIRSLMKYVSELDGQIGGENFLGKLSYTTTARRIHHQFRTMVSGSSLKGIQEALSSAASRDSFTPIPASTPSIGFVFTGQGAQYTGMGQQLYSSCSQFRDNIDRFDSIARSQGFPSIVPLIDGSVPVEEMSPVVTQLGTTCLQMAMTRYWMSLGVKPAFVLGHSLGNYAALNAAGVLTTSDTIYLSGRRAQLLQEKCQVGTHSMLAIKANLAQIKPFLDDDAYEVACINAPGETVISGLSANIDVLSEKLTAEGLKSTKLRVPYAFHSAQVEPILESLGEVAQGVTFHKPSIPVVSALLGEVINEDNWDALGPRYLQRHCRETVNLLAALEATRHAKLMNEKTIWIEVGSHPICSGMIKGTLGPQANTVASLRRNEDTWKVLCNSLSAIYLAGVDIQWKEYHGDFTSSHQVLQLPAYSWDNKNYYIPYNNNFCLTKGDPTVAKIEAAPTSQFHTTSVQRIVETRDEGSKAVVVMESDLSDPLLNPVIQGHKVNGAALCPSSLYADIAQTLGEYLIENYNPALRGSGLDVCDMTVPKPLIAKNSGPQLFRAMATADWEERKANIQIYSVKSDGKKIMDHASCLVKFSDTHLWEADWKRHSYLIKRSIERLQKSVEEGQSHRMHRGMFYKLFSALVDYGDNYKSVEEVVLDSEEYEATARVKFQAKSGNFHRNPFWIDSIGHLTGFVMNANDATDSQSQVYVNHGWDFMRCLKKFSPDTTYRTYVKMQPWQGTIYAGDVYAFDGDEIVAVYGGVKFQGVPRQVLNTVLPPAGGSKAAPRTTARAVPPPPINVEKPKSSVEAKAVSKAVPGDPVKSAGPSVLVQALKILAEEIGVSEAELSDDLVFADYGVDSLLSLTITGKFREELNMDLESSTFIDHPTVKDLKQLLSQASPSDSSDSSEESHYSFRDSSSTEPSTPGTPAFFSPKRGSVVTNVGESETIKTIRLTLSEEIGVSPDEITGDANLAEMGMDSLLSLTVLGRLRETLDIELPSDFFIENPTMDAVETALDLKPKAEPIPSELPVPIQTAAGDEINGVIKANSTHPPATSILLQGNPKKATKTLFLFPDGSGSATSYATLPAVSSDVCVYGLNCPYMKNPENLKCGLDELTMPYVAEIRRRQPKGPYSFGGWSAGGICAYDAARYLILEEGEKVERLLLLDSPFPIGLEKLPPRLYSFFNTIGLFGEGKTPPPKWLLPHFLAFIDSLDAYNAVPFPFSDPELGENMPKTYLIWAKDGVCGKPGDPRPDPPTDGSKDPREMLWLLNDRTDMGPNGWDTLVGPNNVAAIEAIEGADHFTMMKGDKAAKLSAFIGRAMAS</sequence>
<reference key="1">
    <citation type="journal article" date="2017" name="Genome Announc.">
        <title>Draft genome sequences of several fungal strains selected for exposure to microgravity at the international space station.</title>
        <authorList>
            <person name="Singh N.K."/>
            <person name="Blachowicz A."/>
            <person name="Romsdahl J."/>
            <person name="Wang C."/>
            <person name="Torok T."/>
            <person name="Venkateswaran K."/>
        </authorList>
    </citation>
    <scope>NUCLEOTIDE SEQUENCE [LARGE SCALE GENOMIC DNA]</scope>
</reference>
<reference key="2">
    <citation type="journal article" date="2021" name="Fungal Genet. Biol.">
        <title>Identification of the pigment and its role in UV resistance in Paecilomyces variotii, a Chernobyl isolate, using genetic manipulation strategies.</title>
        <authorList>
            <person name="Lim S."/>
            <person name="Bijlani S."/>
            <person name="Blachowicz A."/>
            <person name="Chiang Y.M."/>
            <person name="Lee M.S."/>
            <person name="Torok T."/>
            <person name="Venkateswaran K."/>
            <person name="Wang C.C.C."/>
        </authorList>
    </citation>
    <scope>FUNCTION</scope>
    <scope>DOMAIN</scope>
    <scope>DISRUPTION PHENOTYPE</scope>
    <scope>CATALYTIC ACTIVITY</scope>
    <scope>PATHWAY</scope>
    <source>
        <strain>IMV 00236</strain>
    </source>
</reference>
<protein>
    <recommendedName>
        <fullName evidence="11">Non-reducing polyketide synthase PvBS090_009107</fullName>
        <ecNumber evidence="10">2.3.1.-</ecNumber>
    </recommendedName>
    <alternativeName>
        <fullName evidence="11">Pigment biosynthesis cluster 24 polyketide synthase</fullName>
    </alternativeName>
</protein>
<comment type="function">
    <text evidence="10 12">Non-reducing polyketide synthase; part of the gene cluster 24 that mediates the biosynthesis of a pigment with an aromatic structure protecting the pigmented fungus from both ionizing and non-ionizing radiations based on a mechanism similar to melanin, that is, free radical quenching and spherical spatial arrangement (PubMed:33989788). Catalyzes the biosynthesis of the gamma-naphthopyrone precursor YWA1, via condensation of one acetyl-CoA starter unit with 6 malonyl-CoA units (PubMed:33989788). YWA1 is probably further processed by the additional enzymes present within the cluster 24, however these additional steps have not been characterized yet (Probable). YWA1 is not converted to DHN-melanin in Byssochlamys spectabilis since the use of the DHN-melanin pathway inhibitor pyroquilon does not result in a loss of pigmentation (PubMed:33989788).</text>
</comment>
<comment type="catalytic activity">
    <reaction evidence="10">
        <text>6 malonyl-CoA + acetyl-CoA + 6 H(+) = naphtopyrone YWA1 + 6 CO2 + 7 CoA + H2O</text>
        <dbReference type="Rhea" id="RHEA:62652"/>
        <dbReference type="ChEBI" id="CHEBI:15377"/>
        <dbReference type="ChEBI" id="CHEBI:15378"/>
        <dbReference type="ChEBI" id="CHEBI:16526"/>
        <dbReference type="ChEBI" id="CHEBI:57287"/>
        <dbReference type="ChEBI" id="CHEBI:57288"/>
        <dbReference type="ChEBI" id="CHEBI:57384"/>
        <dbReference type="ChEBI" id="CHEBI:133763"/>
    </reaction>
    <physiologicalReaction direction="left-to-right" evidence="10">
        <dbReference type="Rhea" id="RHEA:62653"/>
    </physiologicalReaction>
</comment>
<comment type="pathway">
    <text evidence="10">Secondary metabolite biosynthesis.</text>
</comment>
<comment type="pathway">
    <text evidence="10">Pigment biosynthesis.</text>
</comment>
<comment type="domain">
    <text evidence="3">Multidomain protein; including a starter unit:ACP transacylase (SAT) that selects the starter unit; a ketosynthase (KS) that catalyzes repeated decarboxylative condensation to elongate the polyketide backbone; a malonyl-CoA:ACP transacylase (MAT) that selects and transfers the extender unit malonyl-CoA; a product template (PT) domain that controls the immediate cyclization regioselectivity of the reactive polyketide backbone; and 2 acyl-carrier protein (ACP) domains that serve as the tethers of the growing and completed polyketide via their phosphopantetheinyl arm.</text>
</comment>
<comment type="domain">
    <text evidence="2">The release of the polyketide chain from the non-reducing polyketide synthase is mediated by the thioesterase (TE) domain localized at the C-ter of the protein.</text>
</comment>
<comment type="disruption phenotype">
    <text evidence="10">Leads to the loss of pigmentation and increased sensitivity to UV-C radiations.</text>
</comment>
<comment type="online information" name="Protein Spotlight">
    <link uri="https://www.proteinspotlight.org/back_issues/251/"/>
    <text>The many lives of colour - Issue 251 of October 2022</text>
</comment>
<name>PKS24_BYSSP</name>
<gene>
    <name type="ORF">PvBS090_009107</name>
</gene>